<feature type="chain" id="PRO_0000212824" description="Vacuolar protein sorting-associated protein 41 homolog">
    <location>
        <begin position="1"/>
        <end position="901"/>
    </location>
</feature>
<feature type="repeat" description="CHCR">
    <location>
        <begin position="618"/>
        <end position="760"/>
    </location>
</feature>
<feature type="zinc finger region" description="RING-type; atypical" evidence="2">
    <location>
        <begin position="839"/>
        <end position="893"/>
    </location>
</feature>
<feature type="region of interest" description="Disordered" evidence="3">
    <location>
        <begin position="1"/>
        <end position="37"/>
    </location>
</feature>
<feature type="splice variant" id="VSP_027445" description="In isoform a and isoform b." evidence="10">
    <location>
        <begin position="1"/>
        <end position="142"/>
    </location>
</feature>
<feature type="splice variant" id="VSP_027446" description="In isoform b." evidence="10">
    <original>CYDSTLNDLNVLTQGL</original>
    <variation>TFGYFYFAGGLKVEHR</variation>
    <location>
        <begin position="808"/>
        <end position="823"/>
    </location>
</feature>
<feature type="splice variant" id="VSP_027447" description="In isoform b." evidence="10">
    <location>
        <begin position="824"/>
        <end position="901"/>
    </location>
</feature>
<protein>
    <recommendedName>
        <fullName>Vacuolar protein sorting-associated protein 41 homolog</fullName>
    </recommendedName>
</protein>
<name>VPS41_CAEEL</name>
<sequence length="901" mass="102579">MDETHENEASDSFDPVFENSYHDDVTFNTEDDDEPPLEPRFKYERLKGEETLPFMKTATFTSIDLHDKFIAIGTATGLIYILDHHGYGNFDSVPPLKPHRCAVSKVKFDETGSYVLSCANDSKIVVSGVGNDKLCCTINIQVMPKSIYFSPDFIRQQSGHCFIMGERNLVLYEKRMFQYKASSLYSGSERDGFIHCCSWNENLIAFTNDTGTRVYERGAERIITSVQPSHDVDRVRSSRSPPKHTWMPENNLVIGWADTVTILKIRDDDGVKKGEVHHIFHVSMFICGISYIPESGIDNMELFLVGLQLEGEDFDDCASVISTVTTLTALESSACTILKTSVIRPLGLKEFELQSEDMIESVKLSNHTLPYMIHGLGIPYLATYFILTTKHIIMAVPYGPEDGIRWRLKYKLYDEALDMAKHNADLLSKTDLSPKKVGRMIIEGYLTGKRARAAASRLPLICGECKEEWEWAVNQFEEVKLCTLLAEVLPDGTPTLDPECYQKVLIACLFNNVKQFRKLVQTWSPDLYMTSFIIDRTQWRIQQISKSGNLADVDETERVLMDALAHLYLYERKYESALKILMSCQDFQIFNVIDKHQLFDLVKDQITELMNINSERALRLLLDNADSVEPSFVMEKIGRQPKLQLAYLTKLMSRNEGTEFADKAVQLYAEYDQKKLLPFLRKNANYNVNKARKLCSDKGYIEETIYLLAKSGNHYDAVKMMVREYRNMEKVIDYCKDQNDPDLWIHLLGVVAEFPAHFSQLIIEASNCLDPLLIMDKLPDDSDIPNLSEALDKLLVDYTNHAELQQCCYDSTLNDLNVLTQGLISAADESVSVNIVSRCSLCAQIIINSNQETTKKFSDIKVFKCGHIFHLACSTSEMERRQSIEEGLCIACSDQIELINV</sequence>
<accession>Q19954</accession>
<accession>A3RMR9</accession>
<accession>A3RMS0</accession>
<keyword id="KW-0025">Alternative splicing</keyword>
<keyword id="KW-0053">Apoptosis</keyword>
<keyword id="KW-0963">Cytoplasm</keyword>
<keyword id="KW-0968">Cytoplasmic vesicle</keyword>
<keyword id="KW-0967">Endosome</keyword>
<keyword id="KW-0333">Golgi apparatus</keyword>
<keyword id="KW-0458">Lysosome</keyword>
<keyword id="KW-0472">Membrane</keyword>
<keyword id="KW-0479">Metal-binding</keyword>
<keyword id="KW-0653">Protein transport</keyword>
<keyword id="KW-1185">Reference proteome</keyword>
<keyword id="KW-0813">Transport</keyword>
<keyword id="KW-0862">Zinc</keyword>
<keyword id="KW-0863">Zinc-finger</keyword>
<reference key="1">
    <citation type="journal article" date="1998" name="Science">
        <title>Genome sequence of the nematode C. elegans: a platform for investigating biology.</title>
        <authorList>
            <consortium name="The C. elegans sequencing consortium"/>
        </authorList>
    </citation>
    <scope>NUCLEOTIDE SEQUENCE [LARGE SCALE GENOMIC DNA]</scope>
    <scope>ALTERNATIVE SPLICING</scope>
    <source>
        <strain>Bristol N2</strain>
    </source>
</reference>
<reference key="2">
    <citation type="journal article" date="2005" name="Cancer Cell">
        <title>Chemical genetics identifies Rab geranylgeranyl transferase as an apoptotic target of farnesyl transferase inhibitors.</title>
        <authorList>
            <person name="Lackner M.R."/>
            <person name="Kindt R.M."/>
            <person name="Carroll P.M."/>
            <person name="Brown K."/>
            <person name="Cancilla M.R."/>
            <person name="Chen C."/>
            <person name="de Silva H."/>
            <person name="Franke Y."/>
            <person name="Guan B."/>
            <person name="Heuer T."/>
            <person name="Hung T."/>
            <person name="Keegan K."/>
            <person name="Lee J.M."/>
            <person name="Manne V."/>
            <person name="O'Brien C."/>
            <person name="Parry D."/>
            <person name="Perez-Villar J.J."/>
            <person name="Reddy R.K."/>
            <person name="Xiao H."/>
            <person name="Zhan H."/>
            <person name="Cockett M."/>
            <person name="Plowman G."/>
            <person name="Fitzgerald K."/>
            <person name="Costa M."/>
            <person name="Ross-Macdonald P."/>
        </authorList>
    </citation>
    <scope>FUNCTION</scope>
    <scope>DISRUPTION PHENOTYPE</scope>
</reference>
<reference key="3">
    <citation type="journal article" date="2006" name="Nat. Cell Biol.">
        <title>The endocytic pathway mediates cell entry of dsRNA to induce RNAi silencing.</title>
        <authorList>
            <person name="Saleh M.-C."/>
            <person name="van Rij R.P."/>
            <person name="Hekele A."/>
            <person name="Gillis A."/>
            <person name="Foley E."/>
            <person name="O'Farrell P.H."/>
            <person name="Andino R."/>
        </authorList>
    </citation>
    <scope>FUNCTION</scope>
</reference>
<reference key="4">
    <citation type="journal article" date="2014" name="Dev. Cell">
        <title>The C. elegans LC3 acts downstream of GABARAP to degrade autophagosomes by interacting with the HOPS subunit VPS39.</title>
        <authorList>
            <person name="Manil-Segalen M."/>
            <person name="Lefebvre C."/>
            <person name="Jenzer C."/>
            <person name="Trichet M."/>
            <person name="Boulogne C."/>
            <person name="Satiat-Jeunemaitre B."/>
            <person name="Legouis R."/>
        </authorList>
    </citation>
    <scope>FUNCTION</scope>
    <scope>DISRUPTION PHENOTYPE</scope>
</reference>
<reference key="5">
    <citation type="journal article" date="2014" name="Mol. Biol. Cell">
        <title>Caenorhabditis elegans HOPS and CCZ-1 mediate trafficking to lysosome-related organelles independently of RAB-7 and SAND-1.</title>
        <authorList>
            <person name="Delahaye J.L."/>
            <person name="Foster O.K."/>
            <person name="Vine A."/>
            <person name="Saxton D.S."/>
            <person name="Curtin T.P."/>
            <person name="Somhegyi H."/>
            <person name="Salesky R."/>
            <person name="Hermann G.J."/>
        </authorList>
    </citation>
    <scope>FUNCTION</scope>
    <scope>DISRUPTION PHENOTYPE</scope>
</reference>
<reference key="6">
    <citation type="journal article" date="2014" name="Mol. Biol. Cell">
        <title>Loss of the Sec1/Munc18-family proteins VPS-33.2 and VPS-33.1 bypasses a block in endosome maturation in Caenorhabditis elegans.</title>
        <authorList>
            <person name="Solinger J.A."/>
            <person name="Spang A."/>
        </authorList>
    </citation>
    <scope>FUNCTION</scope>
    <scope>DISRUPTION PHENOTYPE</scope>
</reference>
<reference key="7">
    <citation type="journal article" date="2016" name="J. Cell Biol.">
        <title>Negative regulation of phosphatidylinositol 3-phosphate levels in early-to-late endosome conversion.</title>
        <authorList>
            <person name="Liu K."/>
            <person name="Jian Y."/>
            <person name="Sun X."/>
            <person name="Yang C."/>
            <person name="Gao Z."/>
            <person name="Zhang Z."/>
            <person name="Liu X."/>
            <person name="Li Y."/>
            <person name="Xu J."/>
            <person name="Jing Y."/>
            <person name="Mitani S."/>
            <person name="He S."/>
            <person name="Yang C."/>
        </authorList>
    </citation>
    <scope>FUNCTION</scope>
    <scope>DISRUPTION PHENOTYPE</scope>
</reference>
<reference key="8">
    <citation type="journal article" date="2016" name="J. Cell Biol.">
        <title>Correction: Negative regulation of phosphatidylinositol 3-phosphate levels in early-to-late endosome conversion.</title>
        <authorList>
            <person name="Liu K."/>
            <person name="Jian Y."/>
            <person name="Sun X."/>
            <person name="Yang C."/>
            <person name="Gao Z."/>
            <person name="Zhang Z."/>
            <person name="Liu X."/>
            <person name="Li Y."/>
            <person name="Xu J."/>
            <person name="Jing Y."/>
            <person name="Mitani S."/>
            <person name="He S."/>
            <person name="Yang C."/>
        </authorList>
    </citation>
    <scope>ERRATUM OF PUBMED:26783301</scope>
</reference>
<gene>
    <name evidence="12" type="primary">vps-41</name>
    <name evidence="12" type="ORF">F32A6.3</name>
</gene>
<dbReference type="EMBL" id="FO080679">
    <property type="protein sequence ID" value="CCD65714.1"/>
    <property type="molecule type" value="Genomic_DNA"/>
</dbReference>
<dbReference type="EMBL" id="FO080679">
    <property type="protein sequence ID" value="CCD65718.1"/>
    <property type="molecule type" value="Genomic_DNA"/>
</dbReference>
<dbReference type="EMBL" id="FO080679">
    <property type="protein sequence ID" value="CCD65724.1"/>
    <property type="molecule type" value="Genomic_DNA"/>
</dbReference>
<dbReference type="EMBL" id="FO081274">
    <property type="protein sequence ID" value="CCD70397.1"/>
    <property type="molecule type" value="Genomic_DNA"/>
</dbReference>
<dbReference type="PIR" id="T16236">
    <property type="entry name" value="T16236"/>
</dbReference>
<dbReference type="RefSeq" id="NP_001033544.1">
    <property type="nucleotide sequence ID" value="NM_001038455.3"/>
</dbReference>
<dbReference type="RefSeq" id="NP_001033545.2">
    <property type="nucleotide sequence ID" value="NM_001038456.3"/>
</dbReference>
<dbReference type="RefSeq" id="NP_001123142.1">
    <property type="nucleotide sequence ID" value="NM_001129670.2"/>
</dbReference>
<dbReference type="RefSeq" id="NP_001367568.1">
    <molecule id="Q19954-1"/>
    <property type="nucleotide sequence ID" value="NM_001380962.1"/>
</dbReference>
<dbReference type="RefSeq" id="NP_001370495.1">
    <molecule id="Q19954-2"/>
    <property type="nucleotide sequence ID" value="NM_001383575.2"/>
</dbReference>
<dbReference type="RefSeq" id="NP_001370496.1">
    <molecule id="Q19954-3"/>
    <property type="nucleotide sequence ID" value="NM_001383576.1"/>
</dbReference>
<dbReference type="BioGRID" id="45734">
    <property type="interactions" value="1"/>
</dbReference>
<dbReference type="ComplexPortal" id="CPX-1136">
    <property type="entry name" value="HOPS tethering complex"/>
</dbReference>
<dbReference type="FunCoup" id="Q19954">
    <property type="interactions" value="2552"/>
</dbReference>
<dbReference type="STRING" id="6239.F32A6.3c.1"/>
<dbReference type="PaxDb" id="6239-F32A6.3c"/>
<dbReference type="PeptideAtlas" id="Q19954"/>
<dbReference type="EnsemblMetazoa" id="F32A6.3a.1">
    <molecule id="Q19954-2"/>
    <property type="protein sequence ID" value="F32A6.3a.1"/>
    <property type="gene ID" value="WBGene00017974"/>
</dbReference>
<dbReference type="EnsemblMetazoa" id="F32A6.3b.1">
    <molecule id="Q19954-3"/>
    <property type="protein sequence ID" value="F32A6.3b.1"/>
    <property type="gene ID" value="WBGene00017974"/>
</dbReference>
<dbReference type="EnsemblMetazoa" id="F32A6.3c.1">
    <molecule id="Q19954-1"/>
    <property type="protein sequence ID" value="F32A6.3c.1"/>
    <property type="gene ID" value="WBGene00017974"/>
</dbReference>
<dbReference type="GeneID" id="180800"/>
<dbReference type="UCSC" id="F32A6.3b">
    <molecule id="Q19954-1"/>
    <property type="organism name" value="c. elegans"/>
</dbReference>
<dbReference type="AGR" id="WB:WBGene00017974"/>
<dbReference type="WormBase" id="F32A6.3a">
    <molecule id="Q19954-2"/>
    <property type="protein sequence ID" value="CE37009"/>
    <property type="gene ID" value="WBGene00017974"/>
    <property type="gene designation" value="vps-41"/>
</dbReference>
<dbReference type="WormBase" id="F32A6.3b">
    <molecule id="Q19954-3"/>
    <property type="protein sequence ID" value="CE40762"/>
    <property type="gene ID" value="WBGene00017974"/>
    <property type="gene designation" value="vps-41"/>
</dbReference>
<dbReference type="WormBase" id="F32A6.3c">
    <molecule id="Q19954-1"/>
    <property type="protein sequence ID" value="CE40763"/>
    <property type="gene ID" value="WBGene00017974"/>
    <property type="gene designation" value="vps-41"/>
</dbReference>
<dbReference type="eggNOG" id="KOG2066">
    <property type="taxonomic scope" value="Eukaryota"/>
</dbReference>
<dbReference type="GeneTree" id="ENSGT00390000000481"/>
<dbReference type="HOGENOM" id="CLU_001285_2_2_1"/>
<dbReference type="InParanoid" id="Q19954"/>
<dbReference type="OMA" id="PQLVWQD"/>
<dbReference type="OrthoDB" id="244107at2759"/>
<dbReference type="PhylomeDB" id="Q19954"/>
<dbReference type="PRO" id="PR:Q19954"/>
<dbReference type="Proteomes" id="UP000001940">
    <property type="component" value="Chromosome X"/>
</dbReference>
<dbReference type="Bgee" id="WBGene00017974">
    <property type="expression patterns" value="Expressed in embryo and 3 other cell types or tissues"/>
</dbReference>
<dbReference type="GO" id="GO:0030136">
    <property type="term" value="C:clathrin-coated vesicle"/>
    <property type="evidence" value="ECO:0007669"/>
    <property type="project" value="UniProtKB-SubCell"/>
</dbReference>
<dbReference type="GO" id="GO:0005829">
    <property type="term" value="C:cytosol"/>
    <property type="evidence" value="ECO:0007669"/>
    <property type="project" value="UniProtKB-SubCell"/>
</dbReference>
<dbReference type="GO" id="GO:0031901">
    <property type="term" value="C:early endosome membrane"/>
    <property type="evidence" value="ECO:0007669"/>
    <property type="project" value="UniProtKB-SubCell"/>
</dbReference>
<dbReference type="GO" id="GO:0005794">
    <property type="term" value="C:Golgi apparatus"/>
    <property type="evidence" value="ECO:0007669"/>
    <property type="project" value="UniProtKB-SubCell"/>
</dbReference>
<dbReference type="GO" id="GO:0030897">
    <property type="term" value="C:HOPS complex"/>
    <property type="evidence" value="ECO:0000250"/>
    <property type="project" value="UniProtKB"/>
</dbReference>
<dbReference type="GO" id="GO:0005770">
    <property type="term" value="C:late endosome"/>
    <property type="evidence" value="ECO:0000318"/>
    <property type="project" value="GO_Central"/>
</dbReference>
<dbReference type="GO" id="GO:0031902">
    <property type="term" value="C:late endosome membrane"/>
    <property type="evidence" value="ECO:0007669"/>
    <property type="project" value="UniProtKB-SubCell"/>
</dbReference>
<dbReference type="GO" id="GO:0005765">
    <property type="term" value="C:lysosomal membrane"/>
    <property type="evidence" value="ECO:0007669"/>
    <property type="project" value="UniProtKB-SubCell"/>
</dbReference>
<dbReference type="GO" id="GO:0005773">
    <property type="term" value="C:vacuole"/>
    <property type="evidence" value="ECO:0000305"/>
    <property type="project" value="UniProtKB"/>
</dbReference>
<dbReference type="GO" id="GO:0008270">
    <property type="term" value="F:zinc ion binding"/>
    <property type="evidence" value="ECO:0007669"/>
    <property type="project" value="UniProtKB-KW"/>
</dbReference>
<dbReference type="GO" id="GO:0006915">
    <property type="term" value="P:apoptotic process"/>
    <property type="evidence" value="ECO:0007669"/>
    <property type="project" value="UniProtKB-KW"/>
</dbReference>
<dbReference type="GO" id="GO:0009267">
    <property type="term" value="P:cellular response to starvation"/>
    <property type="evidence" value="ECO:0000318"/>
    <property type="project" value="GO_Central"/>
</dbReference>
<dbReference type="GO" id="GO:0034058">
    <property type="term" value="P:endosomal vesicle fusion"/>
    <property type="evidence" value="ECO:0000318"/>
    <property type="project" value="GO_Central"/>
</dbReference>
<dbReference type="GO" id="GO:0016236">
    <property type="term" value="P:macroautophagy"/>
    <property type="evidence" value="ECO:0000318"/>
    <property type="project" value="GO_Central"/>
</dbReference>
<dbReference type="GO" id="GO:0043066">
    <property type="term" value="P:negative regulation of apoptotic process"/>
    <property type="evidence" value="ECO:0000315"/>
    <property type="project" value="UniProtKB"/>
</dbReference>
<dbReference type="GO" id="GO:0006623">
    <property type="term" value="P:protein targeting to vacuole"/>
    <property type="evidence" value="ECO:0000318"/>
    <property type="project" value="GO_Central"/>
</dbReference>
<dbReference type="GO" id="GO:0006624">
    <property type="term" value="P:vacuolar protein processing"/>
    <property type="evidence" value="ECO:0000315"/>
    <property type="project" value="UniProtKB"/>
</dbReference>
<dbReference type="GO" id="GO:0007034">
    <property type="term" value="P:vacuolar transport"/>
    <property type="evidence" value="ECO:0000315"/>
    <property type="project" value="UniProtKB"/>
</dbReference>
<dbReference type="GO" id="GO:0042144">
    <property type="term" value="P:vacuole fusion, non-autophagic"/>
    <property type="evidence" value="ECO:0000303"/>
    <property type="project" value="ComplexPortal"/>
</dbReference>
<dbReference type="GO" id="GO:0016192">
    <property type="term" value="P:vesicle-mediated transport"/>
    <property type="evidence" value="ECO:0000250"/>
    <property type="project" value="UniProtKB"/>
</dbReference>
<dbReference type="FunFam" id="2.130.10.10:FF:002395">
    <property type="entry name" value="Vacuolar protein sorting-associated protein 41 homolog"/>
    <property type="match status" value="1"/>
</dbReference>
<dbReference type="Gene3D" id="1.25.40.10">
    <property type="entry name" value="Tetratricopeptide repeat domain"/>
    <property type="match status" value="1"/>
</dbReference>
<dbReference type="Gene3D" id="2.130.10.10">
    <property type="entry name" value="YVTN repeat-like/Quinoprotein amine dehydrogenase"/>
    <property type="match status" value="1"/>
</dbReference>
<dbReference type="InterPro" id="IPR016024">
    <property type="entry name" value="ARM-type_fold"/>
</dbReference>
<dbReference type="InterPro" id="IPR000547">
    <property type="entry name" value="Clathrin_H-chain/VPS_repeat"/>
</dbReference>
<dbReference type="InterPro" id="IPR011990">
    <property type="entry name" value="TPR-like_helical_dom_sf"/>
</dbReference>
<dbReference type="InterPro" id="IPR016902">
    <property type="entry name" value="VPS41"/>
</dbReference>
<dbReference type="InterPro" id="IPR045111">
    <property type="entry name" value="Vps41/Vps8"/>
</dbReference>
<dbReference type="InterPro" id="IPR015943">
    <property type="entry name" value="WD40/YVTN_repeat-like_dom_sf"/>
</dbReference>
<dbReference type="InterPro" id="IPR036322">
    <property type="entry name" value="WD40_repeat_dom_sf"/>
</dbReference>
<dbReference type="InterPro" id="IPR001841">
    <property type="entry name" value="Znf_RING"/>
</dbReference>
<dbReference type="PANTHER" id="PTHR12616">
    <property type="entry name" value="VACUOLAR PROTEIN SORTING VPS41"/>
    <property type="match status" value="1"/>
</dbReference>
<dbReference type="PANTHER" id="PTHR12616:SF1">
    <property type="entry name" value="VACUOLAR PROTEIN SORTING-ASSOCIATED PROTEIN 41 HOMOLOG"/>
    <property type="match status" value="1"/>
</dbReference>
<dbReference type="Pfam" id="PF23411">
    <property type="entry name" value="Beta-prop_Vps41"/>
    <property type="match status" value="1"/>
</dbReference>
<dbReference type="Pfam" id="PF23556">
    <property type="entry name" value="TPR_Vps41"/>
    <property type="match status" value="1"/>
</dbReference>
<dbReference type="Pfam" id="PF23555">
    <property type="entry name" value="zf-RING_Vps41"/>
    <property type="match status" value="1"/>
</dbReference>
<dbReference type="PIRSF" id="PIRSF028921">
    <property type="entry name" value="VPS41"/>
    <property type="match status" value="1"/>
</dbReference>
<dbReference type="SMART" id="SM00299">
    <property type="entry name" value="CLH"/>
    <property type="match status" value="1"/>
</dbReference>
<dbReference type="SUPFAM" id="SSF48371">
    <property type="entry name" value="ARM repeat"/>
    <property type="match status" value="1"/>
</dbReference>
<dbReference type="SUPFAM" id="SSF57850">
    <property type="entry name" value="RING/U-box"/>
    <property type="match status" value="1"/>
</dbReference>
<dbReference type="SUPFAM" id="SSF50978">
    <property type="entry name" value="WD40 repeat-like"/>
    <property type="match status" value="1"/>
</dbReference>
<dbReference type="PROSITE" id="PS50236">
    <property type="entry name" value="CHCR"/>
    <property type="match status" value="1"/>
</dbReference>
<dbReference type="PROSITE" id="PS50089">
    <property type="entry name" value="ZF_RING_2"/>
    <property type="match status" value="1"/>
</dbReference>
<evidence type="ECO:0000250" key="1">
    <source>
        <dbReference type="UniProtKB" id="P49754"/>
    </source>
</evidence>
<evidence type="ECO:0000255" key="2">
    <source>
        <dbReference type="PROSITE-ProRule" id="PRU00175"/>
    </source>
</evidence>
<evidence type="ECO:0000256" key="3">
    <source>
        <dbReference type="SAM" id="MobiDB-lite"/>
    </source>
</evidence>
<evidence type="ECO:0000269" key="4">
    <source>
    </source>
</evidence>
<evidence type="ECO:0000269" key="5">
    <source>
    </source>
</evidence>
<evidence type="ECO:0000269" key="6">
    <source>
    </source>
</evidence>
<evidence type="ECO:0000269" key="7">
    <source>
    </source>
</evidence>
<evidence type="ECO:0000269" key="8">
    <source>
    </source>
</evidence>
<evidence type="ECO:0000269" key="9">
    <source>
    </source>
</evidence>
<evidence type="ECO:0000305" key="10"/>
<evidence type="ECO:0000305" key="11">
    <source>
    </source>
</evidence>
<evidence type="ECO:0000312" key="12">
    <source>
        <dbReference type="WormBase" id="F32A6.3c"/>
    </source>
</evidence>
<proteinExistence type="inferred from homology"/>
<comment type="function">
    <text evidence="1 4 5 7 8 9 11">Plays a role in vesicle-mediated protein trafficking to lysosomal compartments including the endocytic membrane transport pathways (PubMed:26783301). Believed to act in part as a core component of the putative HOPS endosomal tethering complex which is proposed to be involved in the rab-5-to-rab-7 endosome conversion probably implicating sand-1, and via binding SNAREs and SNARE complexes to mediate tethering and docking events during SNARE-mediated membrane fusion (PubMed:25273556). The HOPS complex is proposed to be recruited to rab-7 on the late endosomal membrane and to regulate late endocytic, phagocytic and autophagic traffic towards lysosomes (By similarity). Within the HOPS complex, contributes to the normal development of gut granules in the adult intestine (PubMed:24501423). May mediate the tethering of autophagosomes with lysosomes (PubMed:24374177). Has a role in the negative regulation of apoptosis (PubMed:15837622). Required for uptake of exogenous dsRNA which is used in experimental RNA silencing (PubMed:16862146).</text>
</comment>
<comment type="subunit">
    <text evidence="1">Probable component of the homotypic fusion and vacuole protein sorting (HOPS) complex consisting of the core class C Vps proteins vps-11, vps-16, vps-18, and which further associates with vps-33.1, vps-39 and vps-41.</text>
</comment>
<comment type="subcellular location">
    <subcellularLocation>
        <location evidence="1">Endosome membrane</location>
        <topology evidence="1">Peripheral membrane protein</topology>
    </subcellularLocation>
    <subcellularLocation>
        <location evidence="1">Late endosome membrane</location>
        <topology evidence="1">Peripheral membrane protein</topology>
    </subcellularLocation>
    <subcellularLocation>
        <location evidence="1">Early endosome membrane</location>
        <topology evidence="1">Peripheral membrane protein</topology>
    </subcellularLocation>
    <subcellularLocation>
        <location evidence="1">Lysosome membrane</location>
        <topology evidence="1">Peripheral membrane protein</topology>
    </subcellularLocation>
    <subcellularLocation>
        <location evidence="1">Golgi apparatus</location>
        <location evidence="1">trans-Golgi network</location>
    </subcellularLocation>
    <subcellularLocation>
        <location evidence="1">Cytoplasmic vesicle</location>
        <location evidence="1">Clathrin-coated vesicle</location>
    </subcellularLocation>
    <subcellularLocation>
        <location evidence="1">Cytoplasm</location>
        <location evidence="1">Cytosol</location>
    </subcellularLocation>
</comment>
<comment type="alternative products">
    <event type="alternative splicing"/>
    <isoform>
        <id>Q19954-1</id>
        <name>c</name>
        <sequence type="displayed"/>
    </isoform>
    <isoform>
        <id>Q19954-2</id>
        <name>a</name>
        <sequence type="described" ref="VSP_027445"/>
    </isoform>
    <isoform>
        <id>Q19954-3</id>
        <name>b</name>
        <sequence type="described" ref="VSP_027445 VSP_027446 VSP_027447"/>
    </isoform>
</comment>
<comment type="disruption phenotype">
    <text evidence="4 6 7 8 9">In 1-cell to 20-cell stage embryos, there is defective autophagosome degradation with an accumulation of lgg-1- and lgg-2-positive autophagosomes and paternal mitochondria close to the nuclei (PubMed:24374177). Clusters of cell corpses in the distal region of the body and show no dsRNA uptake (PubMed:15837622). Reduced number of gut granules in the adult intestine (PubMed:24501423). Endosome/lysosome fusion defects in coelomocytes (PubMed:26783301). Double knockout with either sorf-1 or sorf-2 RNAi results in larger endosomes and larger lysosomes and thus suppresses the endosome/lysosome fusion defects in coelomocytes in the vps-41 single mutant (PubMed:26783301). RNAi-mediated knockdown results in a reduced number of gut granules in embryonic intestinal cells (PubMed:24501423). RNAi-mediated knockdown results in the formation of large late endosomes/lysosomes, but with simultaneous expression of rab-5- and rab-7-positive vesicles on the basal side of gut cells (PubMed:25273556).</text>
</comment>
<comment type="similarity">
    <text evidence="10">Belongs to the VPS41 family.</text>
</comment>
<organism>
    <name type="scientific">Caenorhabditis elegans</name>
    <dbReference type="NCBI Taxonomy" id="6239"/>
    <lineage>
        <taxon>Eukaryota</taxon>
        <taxon>Metazoa</taxon>
        <taxon>Ecdysozoa</taxon>
        <taxon>Nematoda</taxon>
        <taxon>Chromadorea</taxon>
        <taxon>Rhabditida</taxon>
        <taxon>Rhabditina</taxon>
        <taxon>Rhabditomorpha</taxon>
        <taxon>Rhabditoidea</taxon>
        <taxon>Rhabditidae</taxon>
        <taxon>Peloderinae</taxon>
        <taxon>Caenorhabditis</taxon>
    </lineage>
</organism>